<feature type="chain" id="PRO_0000282991" description="CUE domain-containing protein 2">
    <location>
        <begin position="1"/>
        <end position="283"/>
    </location>
</feature>
<feature type="domain" description="CUE" evidence="3">
    <location>
        <begin position="141"/>
        <end position="184"/>
    </location>
</feature>
<feature type="region of interest" description="Disordered" evidence="4">
    <location>
        <begin position="87"/>
        <end position="139"/>
    </location>
</feature>
<feature type="compositionally biased region" description="Polar residues" evidence="4">
    <location>
        <begin position="87"/>
        <end position="109"/>
    </location>
</feature>
<feature type="compositionally biased region" description="Basic and acidic residues" evidence="4">
    <location>
        <begin position="115"/>
        <end position="124"/>
    </location>
</feature>
<feature type="modified residue" description="Phosphoserine" evidence="2">
    <location>
        <position position="110"/>
    </location>
</feature>
<proteinExistence type="evidence at transcript level"/>
<organism>
    <name type="scientific">Bos taurus</name>
    <name type="common">Bovine</name>
    <dbReference type="NCBI Taxonomy" id="9913"/>
    <lineage>
        <taxon>Eukaryota</taxon>
        <taxon>Metazoa</taxon>
        <taxon>Chordata</taxon>
        <taxon>Craniata</taxon>
        <taxon>Vertebrata</taxon>
        <taxon>Euteleostomi</taxon>
        <taxon>Mammalia</taxon>
        <taxon>Eutheria</taxon>
        <taxon>Laurasiatheria</taxon>
        <taxon>Artiodactyla</taxon>
        <taxon>Ruminantia</taxon>
        <taxon>Pecora</taxon>
        <taxon>Bovidae</taxon>
        <taxon>Bovinae</taxon>
        <taxon>Bos</taxon>
    </lineage>
</organism>
<evidence type="ECO:0000250" key="1"/>
<evidence type="ECO:0000250" key="2">
    <source>
        <dbReference type="UniProtKB" id="Q9H467"/>
    </source>
</evidence>
<evidence type="ECO:0000255" key="3">
    <source>
        <dbReference type="PROSITE-ProRule" id="PRU00468"/>
    </source>
</evidence>
<evidence type="ECO:0000256" key="4">
    <source>
        <dbReference type="SAM" id="MobiDB-lite"/>
    </source>
</evidence>
<evidence type="ECO:0000305" key="5"/>
<comment type="function">
    <text evidence="1">Controls PGR and ESR1 protein levels through their targeting for ubiquitination and subsequent proteasomal degradation.</text>
</comment>
<comment type="subunit">
    <text evidence="1">Interacts with PGR and ESR1.</text>
</comment>
<comment type="subcellular location">
    <subcellularLocation>
        <location evidence="1">Cytoplasm</location>
    </subcellularLocation>
    <subcellularLocation>
        <location evidence="1">Nucleus</location>
    </subcellularLocation>
</comment>
<comment type="domain">
    <text evidence="1">The CUE domain mediates interaction with PGR and ESR1.</text>
</comment>
<comment type="similarity">
    <text evidence="5">Belongs to the CUEDC2 family.</text>
</comment>
<reference key="1">
    <citation type="submission" date="2005-08" db="EMBL/GenBank/DDBJ databases">
        <authorList>
            <consortium name="NIH - Mammalian Gene Collection (MGC) project"/>
        </authorList>
    </citation>
    <scope>NUCLEOTIDE SEQUENCE [LARGE SCALE MRNA]</scope>
    <source>
        <strain>Hereford</strain>
        <tissue>Thymus</tissue>
    </source>
</reference>
<accession>Q3ZBN4</accession>
<sequence length="283" mass="31532">MELERIVSAALLAFVQTHLPEADLSGLDDVIFSYVLGVLGDLGPSGPSEENFDMEAFTEMMEAYVPGFAHIPRGTIGDMIQKLSGQLSGARNKENVQPQSSEVQGQVSISPEPLQRPEKLKEETMSSAGDTQDEAAGPEEELLPGVDVLLEVFPTCSVEQAQWVLAKARGDLEEAVQMLVEGKQGPPAWDGPNQDLPRRLRGPQKDELKSFILQKYMMVDSAEDQKIHRPMAPKEAPKKLIRYIDNQIVSTKGERFKDVRNPEAEEMKATYINLKPARKYRFH</sequence>
<name>CUED2_BOVIN</name>
<dbReference type="EMBL" id="BC103201">
    <property type="protein sequence ID" value="AAI03202.1"/>
    <property type="molecule type" value="mRNA"/>
</dbReference>
<dbReference type="RefSeq" id="NP_001069205.1">
    <property type="nucleotide sequence ID" value="NM_001075737.1"/>
</dbReference>
<dbReference type="RefSeq" id="XP_024841384.1">
    <property type="nucleotide sequence ID" value="XM_024985616.2"/>
</dbReference>
<dbReference type="RefSeq" id="XP_024841385.1">
    <property type="nucleotide sequence ID" value="XM_024985617.2"/>
</dbReference>
<dbReference type="RefSeq" id="XP_024841386.1">
    <property type="nucleotide sequence ID" value="XM_024985618.2"/>
</dbReference>
<dbReference type="FunCoup" id="Q3ZBN4">
    <property type="interactions" value="2834"/>
</dbReference>
<dbReference type="STRING" id="9913.ENSBTAP00000003250"/>
<dbReference type="Ensembl" id="ENSBTAT00000003250.6">
    <property type="protein sequence ID" value="ENSBTAP00000003250.6"/>
    <property type="gene ID" value="ENSBTAG00000002501.6"/>
</dbReference>
<dbReference type="GeneID" id="516091"/>
<dbReference type="KEGG" id="bta:516091"/>
<dbReference type="CTD" id="79004"/>
<dbReference type="VEuPathDB" id="HostDB:ENSBTAG00000002501"/>
<dbReference type="VGNC" id="VGNC:55945">
    <property type="gene designation" value="CUEDC2"/>
</dbReference>
<dbReference type="GeneTree" id="ENSGT00390000014513"/>
<dbReference type="InParanoid" id="Q3ZBN4"/>
<dbReference type="OMA" id="CLKPQTE"/>
<dbReference type="OrthoDB" id="10060331at2759"/>
<dbReference type="Proteomes" id="UP000009136">
    <property type="component" value="Chromosome 26"/>
</dbReference>
<dbReference type="Bgee" id="ENSBTAG00000002501">
    <property type="expression patterns" value="Expressed in uterine tube infundibulum and 105 other cell types or tissues"/>
</dbReference>
<dbReference type="GO" id="GO:0005829">
    <property type="term" value="C:cytosol"/>
    <property type="evidence" value="ECO:0007669"/>
    <property type="project" value="Ensembl"/>
</dbReference>
<dbReference type="GO" id="GO:0031965">
    <property type="term" value="C:nuclear membrane"/>
    <property type="evidence" value="ECO:0007669"/>
    <property type="project" value="Ensembl"/>
</dbReference>
<dbReference type="GO" id="GO:0005654">
    <property type="term" value="C:nucleoplasm"/>
    <property type="evidence" value="ECO:0007669"/>
    <property type="project" value="Ensembl"/>
</dbReference>
<dbReference type="GO" id="GO:0043130">
    <property type="term" value="F:ubiquitin binding"/>
    <property type="evidence" value="ECO:0007669"/>
    <property type="project" value="InterPro"/>
</dbReference>
<dbReference type="GO" id="GO:1900016">
    <property type="term" value="P:negative regulation of cytokine production involved in inflammatory response"/>
    <property type="evidence" value="ECO:0007669"/>
    <property type="project" value="Ensembl"/>
</dbReference>
<dbReference type="GO" id="GO:0010936">
    <property type="term" value="P:negative regulation of macrophage cytokine production"/>
    <property type="evidence" value="ECO:0007669"/>
    <property type="project" value="Ensembl"/>
</dbReference>
<dbReference type="CDD" id="cd14367">
    <property type="entry name" value="CUE_CUED2"/>
    <property type="match status" value="1"/>
</dbReference>
<dbReference type="InterPro" id="IPR003892">
    <property type="entry name" value="CUE"/>
</dbReference>
<dbReference type="InterPro" id="IPR039805">
    <property type="entry name" value="CUE_CUED2"/>
</dbReference>
<dbReference type="PANTHER" id="PTHR12493">
    <property type="entry name" value="CUE DOMAIN CONTAINING 2"/>
    <property type="match status" value="1"/>
</dbReference>
<dbReference type="PANTHER" id="PTHR12493:SF0">
    <property type="entry name" value="CUE DOMAIN-CONTAINING PROTEIN 2"/>
    <property type="match status" value="1"/>
</dbReference>
<dbReference type="Pfam" id="PF02845">
    <property type="entry name" value="CUE"/>
    <property type="match status" value="1"/>
</dbReference>
<dbReference type="PROSITE" id="PS51140">
    <property type="entry name" value="CUE"/>
    <property type="match status" value="1"/>
</dbReference>
<protein>
    <recommendedName>
        <fullName>CUE domain-containing protein 2</fullName>
    </recommendedName>
</protein>
<gene>
    <name type="primary">CUEDC2</name>
</gene>
<keyword id="KW-0963">Cytoplasm</keyword>
<keyword id="KW-0539">Nucleus</keyword>
<keyword id="KW-0597">Phosphoprotein</keyword>
<keyword id="KW-1185">Reference proteome</keyword>
<keyword id="KW-0833">Ubl conjugation pathway</keyword>